<dbReference type="EMBL" id="X00493">
    <property type="protein sequence ID" value="CAA25171.1"/>
    <property type="molecule type" value="Genomic_DNA"/>
</dbReference>
<dbReference type="PIR" id="A04498">
    <property type="entry name" value="QQAG6T"/>
</dbReference>
<dbReference type="RefSeq" id="NP_059678.1">
    <property type="nucleotide sequence ID" value="NC_002377.1"/>
</dbReference>
<dbReference type="SMR" id="P04030"/>
<dbReference type="InterPro" id="IPR006064">
    <property type="entry name" value="Glycosidase"/>
</dbReference>
<dbReference type="Pfam" id="PF02027">
    <property type="entry name" value="RolB_RolC"/>
    <property type="match status" value="1"/>
</dbReference>
<sequence length="191" mass="21466">MDRMSMARQGWLVPCLSHGKDDQLQGELSELSKVYREKFQTDLHTKSGDIINPGGEFLYIYLDKENYRLCRQRMVLVSNASDGLLATTLEPYSDGYTFRQVRAQLQALSGDGGRINYSKNEYSSSYFLAIQASNEFERIGVVRNTFGQSKDVWKRKMPSAGQPLDYLLIAVGCSAFLPEAALEDVELDGAI</sequence>
<proteinExistence type="predicted"/>
<organism>
    <name type="scientific">Agrobacterium tumefaciens (strain Ach5)</name>
    <dbReference type="NCBI Taxonomy" id="176298"/>
    <lineage>
        <taxon>Bacteria</taxon>
        <taxon>Pseudomonadati</taxon>
        <taxon>Pseudomonadota</taxon>
        <taxon>Alphaproteobacteria</taxon>
        <taxon>Hyphomicrobiales</taxon>
        <taxon>Rhizobiaceae</taxon>
        <taxon>Rhizobium/Agrobacterium group</taxon>
        <taxon>Agrobacterium</taxon>
        <taxon>Agrobacterium tumefaciens complex</taxon>
    </lineage>
</organism>
<protein>
    <recommendedName>
        <fullName>Uncharacterized protein 6</fullName>
    </recommendedName>
</protein>
<feature type="chain" id="PRO_0000197038" description="Uncharacterized protein 6">
    <location>
        <begin position="1"/>
        <end position="191"/>
    </location>
</feature>
<geneLocation type="plasmid">
    <name>pTiAch5</name>
</geneLocation>
<keyword id="KW-0192">Crown gall tumor</keyword>
<keyword id="KW-0614">Plasmid</keyword>
<name>YP6_AGRT4</name>
<reference key="1">
    <citation type="journal article" date="1984" name="EMBO J.">
        <title>The complete nucleotide sequence of the TL-DNA of the Agrobacterium tumefaciens plasmid pTiAch5.</title>
        <authorList>
            <person name="Gielen J."/>
            <person name="de Beuckeleer M."/>
            <person name="Seurinck J."/>
            <person name="Deboeck F."/>
            <person name="de Greve H."/>
            <person name="Lemmers M."/>
            <person name="van Montagu M."/>
            <person name="Schell J."/>
        </authorList>
    </citation>
    <scope>NUCLEOTIDE SEQUENCE [GENOMIC DNA]</scope>
</reference>
<accession>P04030</accession>